<sequence length="507" mass="54798">MDYPPLKGAALAWVTLSLGLAVFMEVLDTTIANVAVPVIAGNLGAATTQGTWVITSFSVANAVSVPLTGFLAKRIGEVKLFTAAAAGFVIASWLCGIAPNLQSLVVFRILQGFIAGPLIPLSQSLLMASYPPAKRMLALALWAMTVVVAPVLGPILGGWISGNWHWGWIFFINIPIGIISAWITWKHLKHRETATVRTPTDYVGLTLMMVGIGALQMMLDRGKELDWFASGEIITLGITALVCLSYFIVWELGEKYPIVDLSLFKDRNFTVGAIATSLGFMVYMGTLTLLPLVLQTNLGYTSAWAGLAAAPVGILPVFLSPLIGRFGNKIDMRLLVTASFLTFAFTFYWRTDFYADMDIGNVIWPQFWQGVGVAMFFLPLTTITLSHMKGGQIAAAGSLSNFLRVLMGGVGVSVVSTLWERREALHHTRFAEHITPYSATLHETAAHLSQQGISDGQTLGIINNTITQQGFIIGSNEIFLAGSILFIVLIPIVWLAKPPFHSGGGGH</sequence>
<evidence type="ECO:0000255" key="1"/>
<evidence type="ECO:0000269" key="2">
    <source>
    </source>
</evidence>
<evidence type="ECO:0000269" key="3">
    <source>
    </source>
</evidence>
<evidence type="ECO:0000303" key="4">
    <source>
    </source>
</evidence>
<evidence type="ECO:0000305" key="5"/>
<evidence type="ECO:0000305" key="6">
    <source>
    </source>
</evidence>
<keyword id="KW-0997">Cell inner membrane</keyword>
<keyword id="KW-1003">Cell membrane</keyword>
<keyword id="KW-0472">Membrane</keyword>
<keyword id="KW-0812">Transmembrane</keyword>
<keyword id="KW-1133">Transmembrane helix</keyword>
<keyword id="KW-0813">Transport</keyword>
<reference key="1">
    <citation type="journal article" date="1999" name="Mol. Microbiol.">
        <title>The farAB-encoded efflux pump mediates resistance of gonococci to long-chained antibacterial fatty acids.</title>
        <authorList>
            <person name="Lee E.H."/>
            <person name="Shafer W.M."/>
        </authorList>
    </citation>
    <scope>NUCLEOTIDE SEQUENCE [GENOMIC DNA]</scope>
    <scope>FUNCTION</scope>
    <scope>SUBUNIT</scope>
    <scope>INDUCTION</scope>
    <scope>DISRUPTION PHENOTYPE</scope>
    <source>
        <strain>FA19</strain>
    </source>
</reference>
<reference key="2">
    <citation type="journal article" date="2003" name="J. Bacteriol.">
        <title>FarR regulates the farAB-encoded efflux pump of Neisseria gonorrhoeae via an MtrR regulatory mechanism.</title>
        <authorList>
            <person name="Lee E.H."/>
            <person name="Rouquette-Loughlin C."/>
            <person name="Folster J.P."/>
            <person name="Shafer W.M."/>
        </authorList>
    </citation>
    <scope>INDUCTION</scope>
    <source>
        <strain>FA19</strain>
    </source>
</reference>
<feature type="chain" id="PRO_0000445984" description="Fatty acid resistance protein FarB">
    <location>
        <begin position="1"/>
        <end position="507"/>
    </location>
</feature>
<feature type="transmembrane region" description="Helical" evidence="1">
    <location>
        <begin position="8"/>
        <end position="28"/>
    </location>
</feature>
<feature type="transmembrane region" description="Helical" evidence="1">
    <location>
        <begin position="52"/>
        <end position="72"/>
    </location>
</feature>
<feature type="transmembrane region" description="Helical" evidence="1">
    <location>
        <begin position="78"/>
        <end position="98"/>
    </location>
</feature>
<feature type="transmembrane region" description="Helical" evidence="1">
    <location>
        <begin position="109"/>
        <end position="129"/>
    </location>
</feature>
<feature type="transmembrane region" description="Helical" evidence="1">
    <location>
        <begin position="136"/>
        <end position="156"/>
    </location>
</feature>
<feature type="transmembrane region" description="Helical" evidence="1">
    <location>
        <begin position="164"/>
        <end position="184"/>
    </location>
</feature>
<feature type="transmembrane region" description="Helical" evidence="1">
    <location>
        <begin position="199"/>
        <end position="219"/>
    </location>
</feature>
<feature type="transmembrane region" description="Helical" evidence="1">
    <location>
        <begin position="233"/>
        <end position="253"/>
    </location>
</feature>
<feature type="transmembrane region" description="Helical" evidence="1">
    <location>
        <begin position="274"/>
        <end position="294"/>
    </location>
</feature>
<feature type="transmembrane region" description="Helical" evidence="1">
    <location>
        <begin position="303"/>
        <end position="323"/>
    </location>
</feature>
<feature type="transmembrane region" description="Helical" evidence="1">
    <location>
        <begin position="334"/>
        <end position="354"/>
    </location>
</feature>
<feature type="transmembrane region" description="Helical" evidence="1">
    <location>
        <begin position="363"/>
        <end position="383"/>
    </location>
</feature>
<feature type="transmembrane region" description="Helical" evidence="1">
    <location>
        <begin position="399"/>
        <end position="419"/>
    </location>
</feature>
<feature type="transmembrane region" description="Helical" evidence="1">
    <location>
        <begin position="478"/>
        <end position="498"/>
    </location>
</feature>
<protein>
    <recommendedName>
        <fullName evidence="5">Fatty acid resistance protein FarB</fullName>
    </recommendedName>
    <alternativeName>
        <fullName evidence="5">Efflux pump protein FarB</fullName>
    </alternativeName>
</protein>
<proteinExistence type="evidence at protein level"/>
<organism>
    <name type="scientific">Neisseria gonorrhoeae</name>
    <dbReference type="NCBI Taxonomy" id="485"/>
    <lineage>
        <taxon>Bacteria</taxon>
        <taxon>Pseudomonadati</taxon>
        <taxon>Pseudomonadota</taxon>
        <taxon>Betaproteobacteria</taxon>
        <taxon>Neisseriales</taxon>
        <taxon>Neisseriaceae</taxon>
        <taxon>Neisseria</taxon>
    </lineage>
</organism>
<dbReference type="EMBL" id="AF132910">
    <property type="protein sequence ID" value="AAD54074.1"/>
    <property type="molecule type" value="Genomic_DNA"/>
</dbReference>
<dbReference type="RefSeq" id="WP_017146881.1">
    <property type="nucleotide sequence ID" value="NZ_CP012026.1"/>
</dbReference>
<dbReference type="SMR" id="Q9RQ29"/>
<dbReference type="TCDB" id="2.A.1.3.20">
    <property type="family name" value="the major facilitator superfamily (mfs)"/>
</dbReference>
<dbReference type="PATRIC" id="fig|485.48.peg.1747"/>
<dbReference type="GO" id="GO:0005886">
    <property type="term" value="C:plasma membrane"/>
    <property type="evidence" value="ECO:0007669"/>
    <property type="project" value="UniProtKB-SubCell"/>
</dbReference>
<dbReference type="GO" id="GO:0022857">
    <property type="term" value="F:transmembrane transporter activity"/>
    <property type="evidence" value="ECO:0007669"/>
    <property type="project" value="InterPro"/>
</dbReference>
<dbReference type="CDD" id="cd17503">
    <property type="entry name" value="MFS_LmrB_MDR_like"/>
    <property type="match status" value="1"/>
</dbReference>
<dbReference type="FunFam" id="1.20.1720.10:FF:000002">
    <property type="entry name" value="Multidrug resistance protein B"/>
    <property type="match status" value="1"/>
</dbReference>
<dbReference type="Gene3D" id="1.20.1250.20">
    <property type="entry name" value="MFS general substrate transporter like domains"/>
    <property type="match status" value="1"/>
</dbReference>
<dbReference type="Gene3D" id="1.20.1720.10">
    <property type="entry name" value="Multidrug resistance protein D"/>
    <property type="match status" value="1"/>
</dbReference>
<dbReference type="InterPro" id="IPR004638">
    <property type="entry name" value="EmrB-like"/>
</dbReference>
<dbReference type="InterPro" id="IPR011701">
    <property type="entry name" value="MFS"/>
</dbReference>
<dbReference type="InterPro" id="IPR020846">
    <property type="entry name" value="MFS_dom"/>
</dbReference>
<dbReference type="InterPro" id="IPR036259">
    <property type="entry name" value="MFS_trans_sf"/>
</dbReference>
<dbReference type="NCBIfam" id="TIGR00711">
    <property type="entry name" value="efflux_EmrB"/>
    <property type="match status" value="1"/>
</dbReference>
<dbReference type="PANTHER" id="PTHR42718">
    <property type="entry name" value="MAJOR FACILITATOR SUPERFAMILY MULTIDRUG TRANSPORTER MFSC"/>
    <property type="match status" value="1"/>
</dbReference>
<dbReference type="PANTHER" id="PTHR42718:SF9">
    <property type="entry name" value="MAJOR FACILITATOR SUPERFAMILY MULTIDRUG TRANSPORTER MFSC"/>
    <property type="match status" value="1"/>
</dbReference>
<dbReference type="Pfam" id="PF07690">
    <property type="entry name" value="MFS_1"/>
    <property type="match status" value="1"/>
</dbReference>
<dbReference type="PRINTS" id="PR01036">
    <property type="entry name" value="TCRTETB"/>
</dbReference>
<dbReference type="SUPFAM" id="SSF103473">
    <property type="entry name" value="MFS general substrate transporter"/>
    <property type="match status" value="1"/>
</dbReference>
<dbReference type="PROSITE" id="PS50850">
    <property type="entry name" value="MFS"/>
    <property type="match status" value="1"/>
</dbReference>
<comment type="function">
    <text evidence="2">Mediates resistance to long-chained antibacterial fatty acids (FAs) (PubMed:10447892). Function is dependent on the MtrE outer membrane protein (PubMed:10447892).</text>
</comment>
<comment type="subunit">
    <text evidence="6">Probably part of a tripartite efflux system FarAB-MtrE, which is composed of an inner membrane transporter, FarB, a periplasmic membrane fusion protein, FarA, and an outer membrane component, MtrE.</text>
</comment>
<comment type="subcellular location">
    <subcellularLocation>
        <location evidence="5">Cell inner membrane</location>
        <topology evidence="1">Multi-pass membrane protein</topology>
    </subcellularLocation>
</comment>
<comment type="induction">
    <text evidence="2 3">Expression is positively regulated by MtrR (PubMed:10447892, PubMed:14645274). MtrR acts by modulating the expression of the regulatory protein FarR, which directly controls the expression of the farAB operon (PubMed:14645274).</text>
</comment>
<comment type="disruption phenotype">
    <text evidence="2">Mutant is hypersusceptible to long-chained fatty acids such as palmitic acid, oleic acid and linoleic acid.</text>
</comment>
<comment type="similarity">
    <text evidence="5">Belongs to the major facilitator superfamily. EmrB family.</text>
</comment>
<gene>
    <name evidence="4" type="primary">farB</name>
</gene>
<accession>Q9RQ29</accession>
<name>FARB_NEIGO</name>